<protein>
    <recommendedName>
        <fullName evidence="7">Klaroid protein</fullName>
    </recommendedName>
</protein>
<feature type="chain" id="PRO_0000454909" description="Klaroid protein">
    <location>
        <begin position="1"/>
        <end position="965"/>
    </location>
</feature>
<feature type="transmembrane region" description="Helical" evidence="2">
    <location>
        <begin position="303"/>
        <end position="323"/>
    </location>
</feature>
<feature type="transmembrane region" description="Helical" evidence="2">
    <location>
        <begin position="343"/>
        <end position="363"/>
    </location>
</feature>
<feature type="domain" description="SUN" evidence="3">
    <location>
        <begin position="801"/>
        <end position="963"/>
    </location>
</feature>
<feature type="region of interest" description="Disordered" evidence="4">
    <location>
        <begin position="1"/>
        <end position="20"/>
    </location>
</feature>
<feature type="coiled-coil region" evidence="2">
    <location>
        <begin position="585"/>
        <end position="612"/>
    </location>
</feature>
<comment type="function">
    <text evidence="1 5">Component of the LINC (LInker of Nucleoskeleton and Cytoskeleton) complex involved in the connection between the nuclear lamina and the cytoskeleton (By similarity). Is required to nuclear migration in eye and to anchor klar in the nuclear membrane (PubMed:18820457).</text>
</comment>
<comment type="subunit">
    <text evidence="1">Core component of the LINC complex which is composed of inner nuclear membrane SUN domain-containing proteins coupled to outer nuclear membrane KASH domain-containing nesprins.</text>
</comment>
<comment type="subcellular location">
    <subcellularLocation>
        <location evidence="2">Membrane</location>
        <topology evidence="2">Multi-pass membrane protein</topology>
    </subcellularLocation>
    <subcellularLocation>
        <location evidence="6">Cytoplasm</location>
        <location evidence="6">Cytoskeleton</location>
        <location evidence="6">Microtubule organizing center</location>
    </subcellularLocation>
    <subcellularLocation>
        <location evidence="5 6">Cytoplasm</location>
        <location evidence="5 6">Perinuclear region</location>
    </subcellularLocation>
    <text evidence="5 6">Lam is required for perinuclear localization of Koi (PubMed:18820457). In the fat body, localizes to a perinuclear non-centrosomal microtubule-organizing centers (ncMTOCs) (PubMed:32066907).</text>
</comment>
<comment type="tissue specificity">
    <text evidence="5">Expressed in all cells in the eye disk.</text>
</comment>
<comment type="disruption phenotype">
    <text evidence="5 6">Homozygous mutant flies live to adulthood and are fertile and exhibit rough and irregular eyes (PubMed:18820457). Flies have an aberrant R-cell rhabdomeres morphology and R-cell and cone cell nuclei are mispositioned (PubMed:18820457). RNAi-mediated knockdown produces mild defects in nuclear positioning within fat body cells (PubMed:32066907).</text>
</comment>
<organism>
    <name type="scientific">Drosophila melanogaster</name>
    <name type="common">Fruit fly</name>
    <dbReference type="NCBI Taxonomy" id="7227"/>
    <lineage>
        <taxon>Eukaryota</taxon>
        <taxon>Metazoa</taxon>
        <taxon>Ecdysozoa</taxon>
        <taxon>Arthropoda</taxon>
        <taxon>Hexapoda</taxon>
        <taxon>Insecta</taxon>
        <taxon>Pterygota</taxon>
        <taxon>Neoptera</taxon>
        <taxon>Endopterygota</taxon>
        <taxon>Diptera</taxon>
        <taxon>Brachycera</taxon>
        <taxon>Muscomorpha</taxon>
        <taxon>Ephydroidea</taxon>
        <taxon>Drosophilidae</taxon>
        <taxon>Drosophila</taxon>
        <taxon>Sophophora</taxon>
    </lineage>
</organism>
<name>KOI_DROME</name>
<reference key="1">
    <citation type="journal article" date="2000" name="Science">
        <title>The genome sequence of Drosophila melanogaster.</title>
        <authorList>
            <person name="Adams M.D."/>
            <person name="Celniker S.E."/>
            <person name="Holt R.A."/>
            <person name="Evans C.A."/>
            <person name="Gocayne J.D."/>
            <person name="Amanatides P.G."/>
            <person name="Scherer S.E."/>
            <person name="Li P.W."/>
            <person name="Hoskins R.A."/>
            <person name="Galle R.F."/>
            <person name="George R.A."/>
            <person name="Lewis S.E."/>
            <person name="Richards S."/>
            <person name="Ashburner M."/>
            <person name="Henderson S.N."/>
            <person name="Sutton G.G."/>
            <person name="Wortman J.R."/>
            <person name="Yandell M.D."/>
            <person name="Zhang Q."/>
            <person name="Chen L.X."/>
            <person name="Brandon R.C."/>
            <person name="Rogers Y.-H.C."/>
            <person name="Blazej R.G."/>
            <person name="Champe M."/>
            <person name="Pfeiffer B.D."/>
            <person name="Wan K.H."/>
            <person name="Doyle C."/>
            <person name="Baxter E.G."/>
            <person name="Helt G."/>
            <person name="Nelson C.R."/>
            <person name="Miklos G.L.G."/>
            <person name="Abril J.F."/>
            <person name="Agbayani A."/>
            <person name="An H.-J."/>
            <person name="Andrews-Pfannkoch C."/>
            <person name="Baldwin D."/>
            <person name="Ballew R.M."/>
            <person name="Basu A."/>
            <person name="Baxendale J."/>
            <person name="Bayraktaroglu L."/>
            <person name="Beasley E.M."/>
            <person name="Beeson K.Y."/>
            <person name="Benos P.V."/>
            <person name="Berman B.P."/>
            <person name="Bhandari D."/>
            <person name="Bolshakov S."/>
            <person name="Borkova D."/>
            <person name="Botchan M.R."/>
            <person name="Bouck J."/>
            <person name="Brokstein P."/>
            <person name="Brottier P."/>
            <person name="Burtis K.C."/>
            <person name="Busam D.A."/>
            <person name="Butler H."/>
            <person name="Cadieu E."/>
            <person name="Center A."/>
            <person name="Chandra I."/>
            <person name="Cherry J.M."/>
            <person name="Cawley S."/>
            <person name="Dahlke C."/>
            <person name="Davenport L.B."/>
            <person name="Davies P."/>
            <person name="de Pablos B."/>
            <person name="Delcher A."/>
            <person name="Deng Z."/>
            <person name="Mays A.D."/>
            <person name="Dew I."/>
            <person name="Dietz S.M."/>
            <person name="Dodson K."/>
            <person name="Doup L.E."/>
            <person name="Downes M."/>
            <person name="Dugan-Rocha S."/>
            <person name="Dunkov B.C."/>
            <person name="Dunn P."/>
            <person name="Durbin K.J."/>
            <person name="Evangelista C.C."/>
            <person name="Ferraz C."/>
            <person name="Ferriera S."/>
            <person name="Fleischmann W."/>
            <person name="Fosler C."/>
            <person name="Gabrielian A.E."/>
            <person name="Garg N.S."/>
            <person name="Gelbart W.M."/>
            <person name="Glasser K."/>
            <person name="Glodek A."/>
            <person name="Gong F."/>
            <person name="Gorrell J.H."/>
            <person name="Gu Z."/>
            <person name="Guan P."/>
            <person name="Harris M."/>
            <person name="Harris N.L."/>
            <person name="Harvey D.A."/>
            <person name="Heiman T.J."/>
            <person name="Hernandez J.R."/>
            <person name="Houck J."/>
            <person name="Hostin D."/>
            <person name="Houston K.A."/>
            <person name="Howland T.J."/>
            <person name="Wei M.-H."/>
            <person name="Ibegwam C."/>
            <person name="Jalali M."/>
            <person name="Kalush F."/>
            <person name="Karpen G.H."/>
            <person name="Ke Z."/>
            <person name="Kennison J.A."/>
            <person name="Ketchum K.A."/>
            <person name="Kimmel B.E."/>
            <person name="Kodira C.D."/>
            <person name="Kraft C.L."/>
            <person name="Kravitz S."/>
            <person name="Kulp D."/>
            <person name="Lai Z."/>
            <person name="Lasko P."/>
            <person name="Lei Y."/>
            <person name="Levitsky A.A."/>
            <person name="Li J.H."/>
            <person name="Li Z."/>
            <person name="Liang Y."/>
            <person name="Lin X."/>
            <person name="Liu X."/>
            <person name="Mattei B."/>
            <person name="McIntosh T.C."/>
            <person name="McLeod M.P."/>
            <person name="McPherson D."/>
            <person name="Merkulov G."/>
            <person name="Milshina N.V."/>
            <person name="Mobarry C."/>
            <person name="Morris J."/>
            <person name="Moshrefi A."/>
            <person name="Mount S.M."/>
            <person name="Moy M."/>
            <person name="Murphy B."/>
            <person name="Murphy L."/>
            <person name="Muzny D.M."/>
            <person name="Nelson D.L."/>
            <person name="Nelson D.R."/>
            <person name="Nelson K.A."/>
            <person name="Nixon K."/>
            <person name="Nusskern D.R."/>
            <person name="Pacleb J.M."/>
            <person name="Palazzolo M."/>
            <person name="Pittman G.S."/>
            <person name="Pan S."/>
            <person name="Pollard J."/>
            <person name="Puri V."/>
            <person name="Reese M.G."/>
            <person name="Reinert K."/>
            <person name="Remington K."/>
            <person name="Saunders R.D.C."/>
            <person name="Scheeler F."/>
            <person name="Shen H."/>
            <person name="Shue B.C."/>
            <person name="Siden-Kiamos I."/>
            <person name="Simpson M."/>
            <person name="Skupski M.P."/>
            <person name="Smith T.J."/>
            <person name="Spier E."/>
            <person name="Spradling A.C."/>
            <person name="Stapleton M."/>
            <person name="Strong R."/>
            <person name="Sun E."/>
            <person name="Svirskas R."/>
            <person name="Tector C."/>
            <person name="Turner R."/>
            <person name="Venter E."/>
            <person name="Wang A.H."/>
            <person name="Wang X."/>
            <person name="Wang Z.-Y."/>
            <person name="Wassarman D.A."/>
            <person name="Weinstock G.M."/>
            <person name="Weissenbach J."/>
            <person name="Williams S.M."/>
            <person name="Woodage T."/>
            <person name="Worley K.C."/>
            <person name="Wu D."/>
            <person name="Yang S."/>
            <person name="Yao Q.A."/>
            <person name="Ye J."/>
            <person name="Yeh R.-F."/>
            <person name="Zaveri J.S."/>
            <person name="Zhan M."/>
            <person name="Zhang G."/>
            <person name="Zhao Q."/>
            <person name="Zheng L."/>
            <person name="Zheng X.H."/>
            <person name="Zhong F.N."/>
            <person name="Zhong W."/>
            <person name="Zhou X."/>
            <person name="Zhu S.C."/>
            <person name="Zhu X."/>
            <person name="Smith H.O."/>
            <person name="Gibbs R.A."/>
            <person name="Myers E.W."/>
            <person name="Rubin G.M."/>
            <person name="Venter J.C."/>
        </authorList>
    </citation>
    <scope>NUCLEOTIDE SEQUENCE [LARGE SCALE GENOMIC DNA]</scope>
    <source>
        <strain>Berkeley</strain>
    </source>
</reference>
<reference key="2">
    <citation type="journal article" date="2002" name="Genome Biol.">
        <title>Annotation of the Drosophila melanogaster euchromatic genome: a systematic review.</title>
        <authorList>
            <person name="Misra S."/>
            <person name="Crosby M.A."/>
            <person name="Mungall C.J."/>
            <person name="Matthews B.B."/>
            <person name="Campbell K.S."/>
            <person name="Hradecky P."/>
            <person name="Huang Y."/>
            <person name="Kaminker J.S."/>
            <person name="Millburn G.H."/>
            <person name="Prochnik S.E."/>
            <person name="Smith C.D."/>
            <person name="Tupy J.L."/>
            <person name="Whitfield E.J."/>
            <person name="Bayraktaroglu L."/>
            <person name="Berman B.P."/>
            <person name="Bettencourt B.R."/>
            <person name="Celniker S.E."/>
            <person name="de Grey A.D.N.J."/>
            <person name="Drysdale R.A."/>
            <person name="Harris N.L."/>
            <person name="Richter J."/>
            <person name="Russo S."/>
            <person name="Schroeder A.J."/>
            <person name="Shu S.Q."/>
            <person name="Stapleton M."/>
            <person name="Yamada C."/>
            <person name="Ashburner M."/>
            <person name="Gelbart W.M."/>
            <person name="Rubin G.M."/>
            <person name="Lewis S.E."/>
        </authorList>
    </citation>
    <scope>GENOME REANNOTATION</scope>
    <source>
        <strain>Berkeley</strain>
    </source>
</reference>
<reference key="3">
    <citation type="journal article" date="2007" name="Fly">
        <title>Drosophila klaroid encodes a SUN domain protein required for Klarsicht localization to the nuclear envelope and nuclear migration in the eye.</title>
        <authorList>
            <person name="Kracklauer M.P."/>
            <person name="Banks S.M."/>
            <person name="Xie X."/>
            <person name="Wu Y."/>
            <person name="Fischer J.A."/>
        </authorList>
    </citation>
    <scope>DISRUPTION PHENOTYPE</scope>
    <scope>TISSUE SPECIFICITY</scope>
    <scope>SUBCELLULAR LOCATION</scope>
    <scope>FUNCTION</scope>
</reference>
<reference key="4">
    <citation type="journal article" date="2020" name="Nat. Cell Biol.">
        <title>A perinuclear microtubule-organizing centre controls nuclear positioning and basement membrane secretion.</title>
        <authorList>
            <person name="Zheng Y."/>
            <person name="Buchwalter R.A."/>
            <person name="Zheng C."/>
            <person name="Wight E.M."/>
            <person name="Chen J.V."/>
            <person name="Megraw T.L."/>
        </authorList>
    </citation>
    <scope>SUBCELLULAR LOCATION</scope>
    <scope>DISRUPTION PHENOTYPE</scope>
</reference>
<keyword id="KW-0175">Coiled coil</keyword>
<keyword id="KW-0963">Cytoplasm</keyword>
<keyword id="KW-0206">Cytoskeleton</keyword>
<keyword id="KW-0472">Membrane</keyword>
<keyword id="KW-1185">Reference proteome</keyword>
<keyword id="KW-0812">Transmembrane</keyword>
<keyword id="KW-1133">Transmembrane helix</keyword>
<sequence length="965" mass="109725">MSENTYQIETRRRSRSKTPFLRSSCDHENCEHAGEEGHVHHLKRKSAAPNVQTIIEEHIVESSISKKTRAKAFAQLTSDYSSDDMTPDAKRKQNSITATVTSILTKRSGGATSTPRNRSQLETTQNTLNSAQEKLNQSNGNLSSGNVSDYLAYIEYRDAGEYWNKTPKTDYTYSELSPHRRQLAPGIVAMPNMSRKSLENHNDRVNYMVQQNPAQEEFIRRRYQSKYTQQVNYDSADELDATFGQQKQSWWLIRLIQLVVSSITTVWSRVTNLSATETTAYQNYHAKRQQSQQVGLWWKIVQTIGGGLASLLRYLYVFIGSVLSLDTWLLRSSDAENKSKKRFLIFLLILLPLLLLSGWLLLQEDQRSAYVQRAEALLPLPLSIFGSLRSRFSNAGATLKSWMEVPTVRSPQREAEAIKVNMASIEQNIQKALTAEEYENILNHVNSYVQQLVELKMQQHSKELAPQQIELFVKLMKENLKQIMYKTELSEKDLSDLAIKLKLELQSSGGWQDGAKLSQANLEEITKLIKAEVHLHESHYTIQLDRIDFASLLERILAAPALADFVDARISLRVGELEPKESSGSSDAEVQIERLNREIAFIKLALSDKQAENADLHQSISNLKLGQEDLLERIQQHELSQDRRFHGLLAEIENKLSALNDSQFALLNKQIKLSLVEILGFKQSTAGGSAGQLDDFDLQTWVRSMFVAKDYLEQQLLELNKRTNNNIRDEIERSSILLMSDISQRLKREILLVVEAKHNESTKALKGHIREEEVRQIVKTVLAIYDADKTGLVDFALESAGGQILSTRCTESYQTKSAQISVFGIPLWYPTNTPRVAISPNVQPGECWAFQGFPGFLVLKLNSLVYVTGFTLEHIPKSLSPTGRIESAPRNFTVWGLEQEKDQEPVLFGDYQFEDNGASLQYFAVQNLDIKRPYEIVELRIETNHGHPTYTCLYRFRVHGKPPAT</sequence>
<gene>
    <name evidence="8" type="primary">koi</name>
    <name evidence="8" type="ORF">CG44154</name>
</gene>
<proteinExistence type="evidence at transcript level"/>
<dbReference type="EMBL" id="AE013599">
    <property type="protein sequence ID" value="AGB93271.1"/>
    <property type="molecule type" value="Genomic_DNA"/>
</dbReference>
<dbReference type="EMBL" id="AE013599">
    <property type="protein sequence ID" value="AGB93272.1"/>
    <property type="molecule type" value="Genomic_DNA"/>
</dbReference>
<dbReference type="RefSeq" id="NP_001260738.1">
    <property type="nucleotide sequence ID" value="NM_001273809.1"/>
</dbReference>
<dbReference type="RefSeq" id="NP_001260739.1">
    <property type="nucleotide sequence ID" value="NM_001273810.1"/>
</dbReference>
<dbReference type="SMR" id="A0A0B4KEE4"/>
<dbReference type="FunCoup" id="A0A0B4KEE4">
    <property type="interactions" value="121"/>
</dbReference>
<dbReference type="IntAct" id="A0A0B4KEE4">
    <property type="interactions" value="1"/>
</dbReference>
<dbReference type="STRING" id="7227.FBpp0307480"/>
<dbReference type="PaxDb" id="7227-FBpp0292403"/>
<dbReference type="EnsemblMetazoa" id="FBtr0335512">
    <property type="protein sequence ID" value="FBpp0307480"/>
    <property type="gene ID" value="FBgn0265003"/>
</dbReference>
<dbReference type="EnsemblMetazoa" id="FBtr0335514">
    <property type="protein sequence ID" value="FBpp0307482"/>
    <property type="gene ID" value="FBgn0265003"/>
</dbReference>
<dbReference type="GeneID" id="35594"/>
<dbReference type="KEGG" id="dme:Dmel_CG44154"/>
<dbReference type="AGR" id="FB:FBgn0265003"/>
<dbReference type="CTD" id="35594"/>
<dbReference type="FlyBase" id="FBgn0265003">
    <property type="gene designation" value="koi"/>
</dbReference>
<dbReference type="VEuPathDB" id="VectorBase:FBgn0265003"/>
<dbReference type="InParanoid" id="A0A0B4KEE4"/>
<dbReference type="OMA" id="YERWSLL"/>
<dbReference type="OrthoDB" id="342281at2759"/>
<dbReference type="BioGRID-ORCS" id="35594">
    <property type="hits" value="0 hits in 3 CRISPR screens"/>
</dbReference>
<dbReference type="GenomeRNAi" id="35594"/>
<dbReference type="PRO" id="PR:A0A0B4KEE4"/>
<dbReference type="Proteomes" id="UP000000803">
    <property type="component" value="Chromosome 2R"/>
</dbReference>
<dbReference type="Bgee" id="FBgn0265003">
    <property type="expression patterns" value="Expressed in egg cell and 205 other cell types or tissues"/>
</dbReference>
<dbReference type="ExpressionAtlas" id="A0A0B4KEE4">
    <property type="expression patterns" value="baseline and differential"/>
</dbReference>
<dbReference type="GO" id="GO:0034993">
    <property type="term" value="C:meiotic nuclear membrane microtubule tethering complex"/>
    <property type="evidence" value="ECO:0000318"/>
    <property type="project" value="GO_Central"/>
</dbReference>
<dbReference type="GO" id="GO:0005815">
    <property type="term" value="C:microtubule organizing center"/>
    <property type="evidence" value="ECO:0007669"/>
    <property type="project" value="UniProtKB-SubCell"/>
</dbReference>
<dbReference type="GO" id="GO:0005635">
    <property type="term" value="C:nuclear envelope"/>
    <property type="evidence" value="ECO:0000314"/>
    <property type="project" value="FlyBase"/>
</dbReference>
<dbReference type="GO" id="GO:0034399">
    <property type="term" value="C:nuclear periphery"/>
    <property type="evidence" value="ECO:0000314"/>
    <property type="project" value="FlyBase"/>
</dbReference>
<dbReference type="GO" id="GO:0048471">
    <property type="term" value="C:perinuclear region of cytoplasm"/>
    <property type="evidence" value="ECO:0000314"/>
    <property type="project" value="FlyBase"/>
</dbReference>
<dbReference type="GO" id="GO:0043495">
    <property type="term" value="F:protein-membrane adaptor activity"/>
    <property type="evidence" value="ECO:0000318"/>
    <property type="project" value="GO_Central"/>
</dbReference>
<dbReference type="GO" id="GO:0000724">
    <property type="term" value="P:double-strand break repair via homologous recombination"/>
    <property type="evidence" value="ECO:0000315"/>
    <property type="project" value="FlyBase"/>
</dbReference>
<dbReference type="GO" id="GO:0007097">
    <property type="term" value="P:nuclear migration"/>
    <property type="evidence" value="ECO:0000315"/>
    <property type="project" value="FlyBase"/>
</dbReference>
<dbReference type="GO" id="GO:0051647">
    <property type="term" value="P:nucleus localization"/>
    <property type="evidence" value="ECO:0000315"/>
    <property type="project" value="FlyBase"/>
</dbReference>
<dbReference type="FunFam" id="2.60.120.260:FF:000009">
    <property type="entry name" value="SUN domain-containing protein 1 isoform X1"/>
    <property type="match status" value="1"/>
</dbReference>
<dbReference type="Gene3D" id="2.60.120.260">
    <property type="entry name" value="Galactose-binding domain-like"/>
    <property type="match status" value="1"/>
</dbReference>
<dbReference type="InterPro" id="IPR045119">
    <property type="entry name" value="SUN1-5"/>
</dbReference>
<dbReference type="InterPro" id="IPR012919">
    <property type="entry name" value="SUN_dom"/>
</dbReference>
<dbReference type="PANTHER" id="PTHR12911:SF8">
    <property type="entry name" value="KLAROID PROTEIN-RELATED"/>
    <property type="match status" value="1"/>
</dbReference>
<dbReference type="PANTHER" id="PTHR12911">
    <property type="entry name" value="SAD1/UNC-84-LIKE PROTEIN-RELATED"/>
    <property type="match status" value="1"/>
</dbReference>
<dbReference type="Pfam" id="PF07738">
    <property type="entry name" value="Sad1_UNC"/>
    <property type="match status" value="1"/>
</dbReference>
<dbReference type="PROSITE" id="PS51469">
    <property type="entry name" value="SUN"/>
    <property type="match status" value="1"/>
</dbReference>
<evidence type="ECO:0000250" key="1">
    <source>
        <dbReference type="UniProtKB" id="O94901"/>
    </source>
</evidence>
<evidence type="ECO:0000255" key="2"/>
<evidence type="ECO:0000255" key="3">
    <source>
        <dbReference type="PROSITE-ProRule" id="PRU00802"/>
    </source>
</evidence>
<evidence type="ECO:0000256" key="4">
    <source>
        <dbReference type="SAM" id="MobiDB-lite"/>
    </source>
</evidence>
<evidence type="ECO:0000269" key="5">
    <source>
    </source>
</evidence>
<evidence type="ECO:0000269" key="6">
    <source>
    </source>
</evidence>
<evidence type="ECO:0000305" key="7"/>
<evidence type="ECO:0000312" key="8">
    <source>
        <dbReference type="FlyBase" id="FBgn0265003"/>
    </source>
</evidence>
<accession>A0A0B4KEE4</accession>